<gene>
    <name type="ordered locus">YGL242C</name>
    <name type="ORF">HRE181</name>
</gene>
<sequence>MNTEGASLSEQLLDAARRNNLDLLETVFDSLDNDPEKIAKLINESKEPLGNTALHLCCKYGSWEVLDKILDQDGEIEIDPQNDVDGDTPLHVTVRYSQEEPEHGTFIARNLIEVGADPRVRNYNNQKPVDLVHGDELDELIDLLQGAELAIDSTNGSGDNNEDGEMIDDGPSDDDEEDDKK</sequence>
<accession>P53066</accession>
<accession>D6VV93</accession>
<protein>
    <recommendedName>
        <fullName>Ankyrin repeat-containing protein YGL242C</fullName>
    </recommendedName>
</protein>
<dbReference type="EMBL" id="Z49149">
    <property type="protein sequence ID" value="CAA89013.1"/>
    <property type="molecule type" value="Genomic_DNA"/>
</dbReference>
<dbReference type="EMBL" id="Z72764">
    <property type="protein sequence ID" value="CAA96961.1"/>
    <property type="molecule type" value="Genomic_DNA"/>
</dbReference>
<dbReference type="EMBL" id="BK006941">
    <property type="protein sequence ID" value="DAA07877.1"/>
    <property type="molecule type" value="Genomic_DNA"/>
</dbReference>
<dbReference type="PIR" id="S53938">
    <property type="entry name" value="S53938"/>
</dbReference>
<dbReference type="SMR" id="P53066"/>
<dbReference type="BioGRID" id="32998">
    <property type="interactions" value="168"/>
</dbReference>
<dbReference type="DIP" id="DIP-1859N"/>
<dbReference type="FunCoup" id="P53066">
    <property type="interactions" value="54"/>
</dbReference>
<dbReference type="IntAct" id="P53066">
    <property type="interactions" value="2"/>
</dbReference>
<dbReference type="MINT" id="P53066"/>
<dbReference type="STRING" id="4932.YGL242C"/>
<dbReference type="iPTMnet" id="P53066"/>
<dbReference type="PaxDb" id="4932-YGL242C"/>
<dbReference type="PeptideAtlas" id="P53066"/>
<dbReference type="EnsemblFungi" id="YGL242C_mRNA">
    <property type="protein sequence ID" value="YGL242C"/>
    <property type="gene ID" value="YGL242C"/>
</dbReference>
<dbReference type="KEGG" id="sce:YGL242C"/>
<dbReference type="AGR" id="SGD:S000003211"/>
<dbReference type="SGD" id="S000003211">
    <property type="gene designation" value="YGL242C"/>
</dbReference>
<dbReference type="VEuPathDB" id="FungiDB:YGL242C"/>
<dbReference type="eggNOG" id="ENOG502S4CU">
    <property type="taxonomic scope" value="Eukaryota"/>
</dbReference>
<dbReference type="HOGENOM" id="CLU_097653_0_0_1"/>
<dbReference type="InParanoid" id="P53066"/>
<dbReference type="OMA" id="HICAMYG"/>
<dbReference type="OrthoDB" id="9995210at2759"/>
<dbReference type="BioCyc" id="YEAST:G3O-30714-MONOMER"/>
<dbReference type="BioGRID-ORCS" id="852609">
    <property type="hits" value="0 hits in 10 CRISPR screens"/>
</dbReference>
<dbReference type="PRO" id="PR:P53066"/>
<dbReference type="Proteomes" id="UP000002311">
    <property type="component" value="Chromosome VII"/>
</dbReference>
<dbReference type="RNAct" id="P53066">
    <property type="molecule type" value="protein"/>
</dbReference>
<dbReference type="GO" id="GO:0005737">
    <property type="term" value="C:cytoplasm"/>
    <property type="evidence" value="ECO:0000314"/>
    <property type="project" value="SGD"/>
</dbReference>
<dbReference type="Gene3D" id="1.25.40.20">
    <property type="entry name" value="Ankyrin repeat-containing domain"/>
    <property type="match status" value="1"/>
</dbReference>
<dbReference type="InterPro" id="IPR051637">
    <property type="entry name" value="Ank_repeat_dom-contain_49"/>
</dbReference>
<dbReference type="InterPro" id="IPR002110">
    <property type="entry name" value="Ankyrin_rpt"/>
</dbReference>
<dbReference type="InterPro" id="IPR036770">
    <property type="entry name" value="Ankyrin_rpt-contain_sf"/>
</dbReference>
<dbReference type="PANTHER" id="PTHR24180:SF53">
    <property type="entry name" value="ANKYRIN REPEAT-CONTAINING PROTEIN C105.02C"/>
    <property type="match status" value="1"/>
</dbReference>
<dbReference type="PANTHER" id="PTHR24180">
    <property type="entry name" value="CYCLIN-DEPENDENT KINASE INHIBITOR 2C-RELATED"/>
    <property type="match status" value="1"/>
</dbReference>
<dbReference type="Pfam" id="PF12796">
    <property type="entry name" value="Ank_2"/>
    <property type="match status" value="1"/>
</dbReference>
<dbReference type="SMART" id="SM00248">
    <property type="entry name" value="ANK"/>
    <property type="match status" value="2"/>
</dbReference>
<dbReference type="SUPFAM" id="SSF48403">
    <property type="entry name" value="Ankyrin repeat"/>
    <property type="match status" value="1"/>
</dbReference>
<dbReference type="PROSITE" id="PS50297">
    <property type="entry name" value="ANK_REP_REGION"/>
    <property type="match status" value="1"/>
</dbReference>
<dbReference type="PROSITE" id="PS50088">
    <property type="entry name" value="ANK_REPEAT"/>
    <property type="match status" value="1"/>
</dbReference>
<feature type="chain" id="PRO_0000067245" description="Ankyrin repeat-containing protein YGL242C">
    <location>
        <begin position="1"/>
        <end position="181"/>
    </location>
</feature>
<feature type="repeat" description="ANK 1">
    <location>
        <begin position="49"/>
        <end position="78"/>
    </location>
</feature>
<feature type="repeat" description="ANK 2">
    <location>
        <begin position="85"/>
        <end position="120"/>
    </location>
</feature>
<feature type="region of interest" description="Disordered" evidence="1">
    <location>
        <begin position="151"/>
        <end position="181"/>
    </location>
</feature>
<feature type="compositionally biased region" description="Acidic residues" evidence="1">
    <location>
        <begin position="160"/>
        <end position="181"/>
    </location>
</feature>
<feature type="modified residue" description="N-acetylmethionine" evidence="3">
    <location>
        <position position="1"/>
    </location>
</feature>
<feature type="modified residue" description="Phosphoserine" evidence="2">
    <location>
        <position position="172"/>
    </location>
</feature>
<name>YGZ2_YEAST</name>
<evidence type="ECO:0000256" key="1">
    <source>
        <dbReference type="SAM" id="MobiDB-lite"/>
    </source>
</evidence>
<evidence type="ECO:0007744" key="2">
    <source>
    </source>
</evidence>
<evidence type="ECO:0007744" key="3">
    <source>
    </source>
</evidence>
<proteinExistence type="evidence at protein level"/>
<organism>
    <name type="scientific">Saccharomyces cerevisiae (strain ATCC 204508 / S288c)</name>
    <name type="common">Baker's yeast</name>
    <dbReference type="NCBI Taxonomy" id="559292"/>
    <lineage>
        <taxon>Eukaryota</taxon>
        <taxon>Fungi</taxon>
        <taxon>Dikarya</taxon>
        <taxon>Ascomycota</taxon>
        <taxon>Saccharomycotina</taxon>
        <taxon>Saccharomycetes</taxon>
        <taxon>Saccharomycetales</taxon>
        <taxon>Saccharomycetaceae</taxon>
        <taxon>Saccharomyces</taxon>
    </lineage>
</organism>
<reference key="1">
    <citation type="journal article" date="1995" name="Yeast">
        <title>The sequence of an 11.1 kb DNA fragment between ADH4 and ADE5 on the left arm of chromosome VII, reveals the presence of eight open reading frames.</title>
        <authorList>
            <person name="Vandenbol M."/>
            <person name="Durand P."/>
            <person name="Portetelle D."/>
            <person name="Hilger F."/>
        </authorList>
    </citation>
    <scope>NUCLEOTIDE SEQUENCE [GENOMIC DNA]</scope>
    <source>
        <strain>ATCC 204508 / S288c</strain>
    </source>
</reference>
<reference key="2">
    <citation type="journal article" date="1997" name="Nature">
        <title>The nucleotide sequence of Saccharomyces cerevisiae chromosome VII.</title>
        <authorList>
            <person name="Tettelin H."/>
            <person name="Agostoni-Carbone M.L."/>
            <person name="Albermann K."/>
            <person name="Albers M."/>
            <person name="Arroyo J."/>
            <person name="Backes U."/>
            <person name="Barreiros T."/>
            <person name="Bertani I."/>
            <person name="Bjourson A.J."/>
            <person name="Brueckner M."/>
            <person name="Bruschi C.V."/>
            <person name="Carignani G."/>
            <person name="Castagnoli L."/>
            <person name="Cerdan E."/>
            <person name="Clemente M.L."/>
            <person name="Coblenz A."/>
            <person name="Coglievina M."/>
            <person name="Coissac E."/>
            <person name="Defoor E."/>
            <person name="Del Bino S."/>
            <person name="Delius H."/>
            <person name="Delneri D."/>
            <person name="de Wergifosse P."/>
            <person name="Dujon B."/>
            <person name="Durand P."/>
            <person name="Entian K.-D."/>
            <person name="Eraso P."/>
            <person name="Escribano V."/>
            <person name="Fabiani L."/>
            <person name="Fartmann B."/>
            <person name="Feroli F."/>
            <person name="Feuermann M."/>
            <person name="Frontali L."/>
            <person name="Garcia-Gonzalez M."/>
            <person name="Garcia-Saez M.I."/>
            <person name="Goffeau A."/>
            <person name="Guerreiro P."/>
            <person name="Hani J."/>
            <person name="Hansen M."/>
            <person name="Hebling U."/>
            <person name="Hernandez K."/>
            <person name="Heumann K."/>
            <person name="Hilger F."/>
            <person name="Hofmann B."/>
            <person name="Indge K.J."/>
            <person name="James C.M."/>
            <person name="Klima R."/>
            <person name="Koetter P."/>
            <person name="Kramer B."/>
            <person name="Kramer W."/>
            <person name="Lauquin G."/>
            <person name="Leuther H."/>
            <person name="Louis E.J."/>
            <person name="Maillier E."/>
            <person name="Marconi A."/>
            <person name="Martegani E."/>
            <person name="Mazon M.J."/>
            <person name="Mazzoni C."/>
            <person name="McReynolds A.D.K."/>
            <person name="Melchioretto P."/>
            <person name="Mewes H.-W."/>
            <person name="Minenkova O."/>
            <person name="Mueller-Auer S."/>
            <person name="Nawrocki A."/>
            <person name="Netter P."/>
            <person name="Neu R."/>
            <person name="Nombela C."/>
            <person name="Oliver S.G."/>
            <person name="Panzeri L."/>
            <person name="Paoluzi S."/>
            <person name="Plevani P."/>
            <person name="Portetelle D."/>
            <person name="Portillo F."/>
            <person name="Potier S."/>
            <person name="Purnelle B."/>
            <person name="Rieger M."/>
            <person name="Riles L."/>
            <person name="Rinaldi T."/>
            <person name="Robben J."/>
            <person name="Rodrigues-Pousada C."/>
            <person name="Rodriguez-Belmonte E."/>
            <person name="Rodriguez-Torres A.M."/>
            <person name="Rose M."/>
            <person name="Ruzzi M."/>
            <person name="Saliola M."/>
            <person name="Sanchez-Perez M."/>
            <person name="Schaefer B."/>
            <person name="Schaefer M."/>
            <person name="Scharfe M."/>
            <person name="Schmidheini T."/>
            <person name="Schreer A."/>
            <person name="Skala J."/>
            <person name="Souciet J.-L."/>
            <person name="Steensma H.Y."/>
            <person name="Talla E."/>
            <person name="Thierry A."/>
            <person name="Vandenbol M."/>
            <person name="van der Aart Q.J.M."/>
            <person name="Van Dyck L."/>
            <person name="Vanoni M."/>
            <person name="Verhasselt P."/>
            <person name="Voet M."/>
            <person name="Volckaert G."/>
            <person name="Wambutt R."/>
            <person name="Watson M.D."/>
            <person name="Weber N."/>
            <person name="Wedler E."/>
            <person name="Wedler H."/>
            <person name="Wipfli P."/>
            <person name="Wolf K."/>
            <person name="Wright L.F."/>
            <person name="Zaccaria P."/>
            <person name="Zimmermann M."/>
            <person name="Zollner A."/>
            <person name="Kleine K."/>
        </authorList>
    </citation>
    <scope>NUCLEOTIDE SEQUENCE [LARGE SCALE GENOMIC DNA]</scope>
    <source>
        <strain>ATCC 204508 / S288c</strain>
    </source>
</reference>
<reference key="3">
    <citation type="journal article" date="2014" name="G3 (Bethesda)">
        <title>The reference genome sequence of Saccharomyces cerevisiae: Then and now.</title>
        <authorList>
            <person name="Engel S.R."/>
            <person name="Dietrich F.S."/>
            <person name="Fisk D.G."/>
            <person name="Binkley G."/>
            <person name="Balakrishnan R."/>
            <person name="Costanzo M.C."/>
            <person name="Dwight S.S."/>
            <person name="Hitz B.C."/>
            <person name="Karra K."/>
            <person name="Nash R.S."/>
            <person name="Weng S."/>
            <person name="Wong E.D."/>
            <person name="Lloyd P."/>
            <person name="Skrzypek M.S."/>
            <person name="Miyasato S.R."/>
            <person name="Simison M."/>
            <person name="Cherry J.M."/>
        </authorList>
    </citation>
    <scope>GENOME REANNOTATION</scope>
    <source>
        <strain>ATCC 204508 / S288c</strain>
    </source>
</reference>
<reference key="4">
    <citation type="journal article" date="2008" name="Mol. Cell. Proteomics">
        <title>A multidimensional chromatography technology for in-depth phosphoproteome analysis.</title>
        <authorList>
            <person name="Albuquerque C.P."/>
            <person name="Smolka M.B."/>
            <person name="Payne S.H."/>
            <person name="Bafna V."/>
            <person name="Eng J."/>
            <person name="Zhou H."/>
        </authorList>
    </citation>
    <scope>PHOSPHORYLATION [LARGE SCALE ANALYSIS] AT SER-172</scope>
    <scope>IDENTIFICATION BY MASS SPECTROMETRY [LARGE SCALE ANALYSIS]</scope>
</reference>
<reference key="5">
    <citation type="journal article" date="2012" name="Proc. Natl. Acad. Sci. U.S.A.">
        <title>N-terminal acetylome analyses and functional insights of the N-terminal acetyltransferase NatB.</title>
        <authorList>
            <person name="Van Damme P."/>
            <person name="Lasa M."/>
            <person name="Polevoda B."/>
            <person name="Gazquez C."/>
            <person name="Elosegui-Artola A."/>
            <person name="Kim D.S."/>
            <person name="De Juan-Pardo E."/>
            <person name="Demeyer K."/>
            <person name="Hole K."/>
            <person name="Larrea E."/>
            <person name="Timmerman E."/>
            <person name="Prieto J."/>
            <person name="Arnesen T."/>
            <person name="Sherman F."/>
            <person name="Gevaert K."/>
            <person name="Aldabe R."/>
        </authorList>
    </citation>
    <scope>ACETYLATION [LARGE SCALE ANALYSIS] AT MET-1</scope>
    <scope>IDENTIFICATION BY MASS SPECTROMETRY [LARGE SCALE ANALYSIS]</scope>
</reference>
<keyword id="KW-0007">Acetylation</keyword>
<keyword id="KW-0040">ANK repeat</keyword>
<keyword id="KW-0597">Phosphoprotein</keyword>
<keyword id="KW-1185">Reference proteome</keyword>
<keyword id="KW-0677">Repeat</keyword>